<feature type="chain" id="PRO_0000202286" description="Uncharacterized protein TP_0607">
    <location>
        <begin position="1"/>
        <end position="48"/>
    </location>
</feature>
<keyword id="KW-1185">Reference proteome</keyword>
<gene>
    <name type="ordered locus">TP_0607</name>
</gene>
<sequence length="48" mass="5451">MTVCEGTRFSVLSRISPARVRVVKERRMRASALSVEEWYGSGDYQKSA</sequence>
<reference key="1">
    <citation type="journal article" date="1998" name="Science">
        <title>Complete genome sequence of Treponema pallidum, the syphilis spirochete.</title>
        <authorList>
            <person name="Fraser C.M."/>
            <person name="Norris S.J."/>
            <person name="Weinstock G.M."/>
            <person name="White O."/>
            <person name="Sutton G.G."/>
            <person name="Dodson R.J."/>
            <person name="Gwinn M.L."/>
            <person name="Hickey E.K."/>
            <person name="Clayton R.A."/>
            <person name="Ketchum K.A."/>
            <person name="Sodergren E."/>
            <person name="Hardham J.M."/>
            <person name="McLeod M.P."/>
            <person name="Salzberg S.L."/>
            <person name="Peterson J.D."/>
            <person name="Khalak H.G."/>
            <person name="Richardson D.L."/>
            <person name="Howell J.K."/>
            <person name="Chidambaram M."/>
            <person name="Utterback T.R."/>
            <person name="McDonald L.A."/>
            <person name="Artiach P."/>
            <person name="Bowman C."/>
            <person name="Cotton M.D."/>
            <person name="Fujii C."/>
            <person name="Garland S.A."/>
            <person name="Hatch B."/>
            <person name="Horst K."/>
            <person name="Roberts K.M."/>
            <person name="Sandusky M."/>
            <person name="Weidman J.F."/>
            <person name="Smith H.O."/>
            <person name="Venter J.C."/>
        </authorList>
    </citation>
    <scope>NUCLEOTIDE SEQUENCE [LARGE SCALE GENOMIC DNA]</scope>
    <source>
        <strain>Nichols</strain>
    </source>
</reference>
<name>Y607_TREPA</name>
<organism>
    <name type="scientific">Treponema pallidum (strain Nichols)</name>
    <dbReference type="NCBI Taxonomy" id="243276"/>
    <lineage>
        <taxon>Bacteria</taxon>
        <taxon>Pseudomonadati</taxon>
        <taxon>Spirochaetota</taxon>
        <taxon>Spirochaetia</taxon>
        <taxon>Spirochaetales</taxon>
        <taxon>Treponemataceae</taxon>
        <taxon>Treponema</taxon>
    </lineage>
</organism>
<proteinExistence type="predicted"/>
<protein>
    <recommendedName>
        <fullName>Uncharacterized protein TP_0607</fullName>
    </recommendedName>
</protein>
<dbReference type="EMBL" id="AE000520">
    <property type="protein sequence ID" value="AAC65583.1"/>
    <property type="molecule type" value="Genomic_DNA"/>
</dbReference>
<dbReference type="PIR" id="A71305">
    <property type="entry name" value="A71305"/>
</dbReference>
<dbReference type="IntAct" id="O83616">
    <property type="interactions" value="2"/>
</dbReference>
<dbReference type="STRING" id="243276.TP_0607"/>
<dbReference type="EnsemblBacteria" id="AAC65583">
    <property type="protein sequence ID" value="AAC65583"/>
    <property type="gene ID" value="TP_0607"/>
</dbReference>
<dbReference type="KEGG" id="tpa:TP_0607"/>
<dbReference type="HOGENOM" id="CLU_3190279_0_0_12"/>
<dbReference type="Proteomes" id="UP000000811">
    <property type="component" value="Chromosome"/>
</dbReference>
<accession>O83616</accession>